<keyword id="KW-0963">Cytoplasm</keyword>
<keyword id="KW-0456">Lyase</keyword>
<keyword id="KW-0704">Schiff base</keyword>
<gene>
    <name evidence="1" type="primary">deoC</name>
    <name type="ordered locus">CPF_2309</name>
</gene>
<accession>Q0TNQ8</accession>
<reference key="1">
    <citation type="journal article" date="2006" name="Genome Res.">
        <title>Skewed genomic variability in strains of the toxigenic bacterial pathogen, Clostridium perfringens.</title>
        <authorList>
            <person name="Myers G.S.A."/>
            <person name="Rasko D.A."/>
            <person name="Cheung J.K."/>
            <person name="Ravel J."/>
            <person name="Seshadri R."/>
            <person name="DeBoy R.T."/>
            <person name="Ren Q."/>
            <person name="Varga J."/>
            <person name="Awad M.M."/>
            <person name="Brinkac L.M."/>
            <person name="Daugherty S.C."/>
            <person name="Haft D.H."/>
            <person name="Dodson R.J."/>
            <person name="Madupu R."/>
            <person name="Nelson W.C."/>
            <person name="Rosovitz M.J."/>
            <person name="Sullivan S.A."/>
            <person name="Khouri H."/>
            <person name="Dimitrov G.I."/>
            <person name="Watkins K.L."/>
            <person name="Mulligan S."/>
            <person name="Benton J."/>
            <person name="Radune D."/>
            <person name="Fisher D.J."/>
            <person name="Atkins H.S."/>
            <person name="Hiscox T."/>
            <person name="Jost B.H."/>
            <person name="Billington S.J."/>
            <person name="Songer J.G."/>
            <person name="McClane B.A."/>
            <person name="Titball R.W."/>
            <person name="Rood J.I."/>
            <person name="Melville S.B."/>
            <person name="Paulsen I.T."/>
        </authorList>
    </citation>
    <scope>NUCLEOTIDE SEQUENCE [LARGE SCALE GENOMIC DNA]</scope>
    <source>
        <strain>ATCC 13124 / DSM 756 / JCM 1290 / NCIMB 6125 / NCTC 8237 / S 107 / Type A</strain>
    </source>
</reference>
<organism>
    <name type="scientific">Clostridium perfringens (strain ATCC 13124 / DSM 756 / JCM 1290 / NCIMB 6125 / NCTC 8237 / Type A)</name>
    <dbReference type="NCBI Taxonomy" id="195103"/>
    <lineage>
        <taxon>Bacteria</taxon>
        <taxon>Bacillati</taxon>
        <taxon>Bacillota</taxon>
        <taxon>Clostridia</taxon>
        <taxon>Eubacteriales</taxon>
        <taxon>Clostridiaceae</taxon>
        <taxon>Clostridium</taxon>
    </lineage>
</organism>
<proteinExistence type="inferred from homology"/>
<sequence>MDKQQLAKMIDHTILKPEADKASIEKLCKEALEYNFASVCINPTNVELAAKLLKGSEVKVCTVIGFPLGANTMEVKAFETKDAIAKGADEVDMVINIGRLKDKDYEYVEKDIKAVVDAADKKALTKVIIETCLLTEEEKVKACELAKKAGADFVKTSTGFSTGGATPEDIKLMRETVGPDMGVKASGGVRSIEDAEAVIKNGATRIGASASIAICEGKVSDSTY</sequence>
<feature type="chain" id="PRO_1000015313" description="Deoxyribose-phosphate aldolase">
    <location>
        <begin position="1"/>
        <end position="224"/>
    </location>
</feature>
<feature type="active site" description="Proton donor/acceptor" evidence="1">
    <location>
        <position position="92"/>
    </location>
</feature>
<feature type="active site" description="Schiff-base intermediate with acetaldehyde" evidence="1">
    <location>
        <position position="155"/>
    </location>
</feature>
<feature type="active site" description="Proton donor/acceptor" evidence="1">
    <location>
        <position position="184"/>
    </location>
</feature>
<name>DEOC_CLOP1</name>
<comment type="function">
    <text evidence="1">Catalyzes a reversible aldol reaction between acetaldehyde and D-glyceraldehyde 3-phosphate to generate 2-deoxy-D-ribose 5-phosphate.</text>
</comment>
<comment type="catalytic activity">
    <reaction evidence="1">
        <text>2-deoxy-D-ribose 5-phosphate = D-glyceraldehyde 3-phosphate + acetaldehyde</text>
        <dbReference type="Rhea" id="RHEA:12821"/>
        <dbReference type="ChEBI" id="CHEBI:15343"/>
        <dbReference type="ChEBI" id="CHEBI:59776"/>
        <dbReference type="ChEBI" id="CHEBI:62877"/>
        <dbReference type="EC" id="4.1.2.4"/>
    </reaction>
</comment>
<comment type="pathway">
    <text evidence="1">Carbohydrate degradation; 2-deoxy-D-ribose 1-phosphate degradation; D-glyceraldehyde 3-phosphate and acetaldehyde from 2-deoxy-alpha-D-ribose 1-phosphate: step 2/2.</text>
</comment>
<comment type="subcellular location">
    <subcellularLocation>
        <location evidence="1">Cytoplasm</location>
    </subcellularLocation>
</comment>
<comment type="similarity">
    <text evidence="1">Belongs to the DeoC/FbaB aldolase family. DeoC type 1 subfamily.</text>
</comment>
<evidence type="ECO:0000255" key="1">
    <source>
        <dbReference type="HAMAP-Rule" id="MF_00114"/>
    </source>
</evidence>
<dbReference type="EC" id="4.1.2.4" evidence="1"/>
<dbReference type="EMBL" id="CP000246">
    <property type="protein sequence ID" value="ABG83012.1"/>
    <property type="molecule type" value="Genomic_DNA"/>
</dbReference>
<dbReference type="RefSeq" id="WP_003463155.1">
    <property type="nucleotide sequence ID" value="NC_008261.1"/>
</dbReference>
<dbReference type="SMR" id="Q0TNQ8"/>
<dbReference type="STRING" id="195103.CPF_2309"/>
<dbReference type="PaxDb" id="195103-CPF_2309"/>
<dbReference type="KEGG" id="cpf:CPF_2309"/>
<dbReference type="eggNOG" id="COG0274">
    <property type="taxonomic scope" value="Bacteria"/>
</dbReference>
<dbReference type="HOGENOM" id="CLU_053595_0_1_9"/>
<dbReference type="UniPathway" id="UPA00002">
    <property type="reaction ID" value="UER00468"/>
</dbReference>
<dbReference type="Proteomes" id="UP000001823">
    <property type="component" value="Chromosome"/>
</dbReference>
<dbReference type="GO" id="GO:0005737">
    <property type="term" value="C:cytoplasm"/>
    <property type="evidence" value="ECO:0007669"/>
    <property type="project" value="UniProtKB-SubCell"/>
</dbReference>
<dbReference type="GO" id="GO:0004139">
    <property type="term" value="F:deoxyribose-phosphate aldolase activity"/>
    <property type="evidence" value="ECO:0007669"/>
    <property type="project" value="UniProtKB-UniRule"/>
</dbReference>
<dbReference type="GO" id="GO:0006018">
    <property type="term" value="P:2-deoxyribose 1-phosphate catabolic process"/>
    <property type="evidence" value="ECO:0007669"/>
    <property type="project" value="UniProtKB-UniRule"/>
</dbReference>
<dbReference type="GO" id="GO:0016052">
    <property type="term" value="P:carbohydrate catabolic process"/>
    <property type="evidence" value="ECO:0007669"/>
    <property type="project" value="TreeGrafter"/>
</dbReference>
<dbReference type="GO" id="GO:0009264">
    <property type="term" value="P:deoxyribonucleotide catabolic process"/>
    <property type="evidence" value="ECO:0007669"/>
    <property type="project" value="InterPro"/>
</dbReference>
<dbReference type="CDD" id="cd00959">
    <property type="entry name" value="DeoC"/>
    <property type="match status" value="1"/>
</dbReference>
<dbReference type="FunFam" id="3.20.20.70:FF:000044">
    <property type="entry name" value="Deoxyribose-phosphate aldolase"/>
    <property type="match status" value="1"/>
</dbReference>
<dbReference type="Gene3D" id="3.20.20.70">
    <property type="entry name" value="Aldolase class I"/>
    <property type="match status" value="1"/>
</dbReference>
<dbReference type="HAMAP" id="MF_00114">
    <property type="entry name" value="DeoC_type1"/>
    <property type="match status" value="1"/>
</dbReference>
<dbReference type="InterPro" id="IPR013785">
    <property type="entry name" value="Aldolase_TIM"/>
</dbReference>
<dbReference type="InterPro" id="IPR011343">
    <property type="entry name" value="DeoC"/>
</dbReference>
<dbReference type="InterPro" id="IPR002915">
    <property type="entry name" value="DeoC/FbaB/LacD_aldolase"/>
</dbReference>
<dbReference type="InterPro" id="IPR028581">
    <property type="entry name" value="DeoC_typeI"/>
</dbReference>
<dbReference type="NCBIfam" id="TIGR00126">
    <property type="entry name" value="deoC"/>
    <property type="match status" value="1"/>
</dbReference>
<dbReference type="PANTHER" id="PTHR10889">
    <property type="entry name" value="DEOXYRIBOSE-PHOSPHATE ALDOLASE"/>
    <property type="match status" value="1"/>
</dbReference>
<dbReference type="PANTHER" id="PTHR10889:SF1">
    <property type="entry name" value="DEOXYRIBOSE-PHOSPHATE ALDOLASE"/>
    <property type="match status" value="1"/>
</dbReference>
<dbReference type="Pfam" id="PF01791">
    <property type="entry name" value="DeoC"/>
    <property type="match status" value="1"/>
</dbReference>
<dbReference type="PIRSF" id="PIRSF001357">
    <property type="entry name" value="DeoC"/>
    <property type="match status" value="1"/>
</dbReference>
<dbReference type="SMART" id="SM01133">
    <property type="entry name" value="DeoC"/>
    <property type="match status" value="1"/>
</dbReference>
<dbReference type="SUPFAM" id="SSF51569">
    <property type="entry name" value="Aldolase"/>
    <property type="match status" value="1"/>
</dbReference>
<protein>
    <recommendedName>
        <fullName evidence="1">Deoxyribose-phosphate aldolase</fullName>
        <shortName evidence="1">DERA</shortName>
        <ecNumber evidence="1">4.1.2.4</ecNumber>
    </recommendedName>
    <alternativeName>
        <fullName evidence="1">2-deoxy-D-ribose 5-phosphate aldolase</fullName>
    </alternativeName>
    <alternativeName>
        <fullName evidence="1">Phosphodeoxyriboaldolase</fullName>
        <shortName evidence="1">Deoxyriboaldolase</shortName>
    </alternativeName>
</protein>